<protein>
    <recommendedName>
        <fullName evidence="8">Kappa-theraphotoxin-Cg1a 5</fullName>
        <shortName evidence="8">Kappa-TRTX-Cg1a</shortName>
    </recommendedName>
    <alternativeName>
        <fullName>Jingzhaotoxin-11.5</fullName>
        <shortName>JZTX-11.5</shortName>
    </alternativeName>
    <alternativeName>
        <fullName evidence="5">Jingzhaotoxin-XI.5</fullName>
        <shortName evidence="5 7">JZTX-XI.5</shortName>
    </alternativeName>
    <alternativeName>
        <fullName evidence="6">Peptide F4-13.64</fullName>
    </alternativeName>
</protein>
<sequence length="86" mass="9629">MKVSVLITLAVLGVMFVWTSAAELEERGSDQRDSPAWLKSMERIFQSEERECRKMFGGCSVDSDCCAHLGCKPTLKYCAWDGTFGK</sequence>
<dbReference type="EMBL" id="EU233874">
    <property type="protein sequence ID" value="ABY71693.1"/>
    <property type="molecule type" value="mRNA"/>
</dbReference>
<dbReference type="SMR" id="B1P1E3"/>
<dbReference type="ArachnoServer" id="AS000043">
    <property type="toxin name" value="kappa-theraphotoxin-Cg1a"/>
</dbReference>
<dbReference type="GO" id="GO:0005576">
    <property type="term" value="C:extracellular region"/>
    <property type="evidence" value="ECO:0007669"/>
    <property type="project" value="UniProtKB-SubCell"/>
</dbReference>
<dbReference type="GO" id="GO:0008200">
    <property type="term" value="F:ion channel inhibitor activity"/>
    <property type="evidence" value="ECO:0007669"/>
    <property type="project" value="InterPro"/>
</dbReference>
<dbReference type="GO" id="GO:0015459">
    <property type="term" value="F:potassium channel regulator activity"/>
    <property type="evidence" value="ECO:0007669"/>
    <property type="project" value="UniProtKB-KW"/>
</dbReference>
<dbReference type="GO" id="GO:0017080">
    <property type="term" value="F:sodium channel regulator activity"/>
    <property type="evidence" value="ECO:0007669"/>
    <property type="project" value="UniProtKB-KW"/>
</dbReference>
<dbReference type="GO" id="GO:0090729">
    <property type="term" value="F:toxin activity"/>
    <property type="evidence" value="ECO:0007669"/>
    <property type="project" value="UniProtKB-KW"/>
</dbReference>
<dbReference type="InterPro" id="IPR011696">
    <property type="entry name" value="Huwentoxin-1"/>
</dbReference>
<dbReference type="Pfam" id="PF07740">
    <property type="entry name" value="Toxin_12"/>
    <property type="match status" value="1"/>
</dbReference>
<dbReference type="SUPFAM" id="SSF57059">
    <property type="entry name" value="omega toxin-like"/>
    <property type="match status" value="1"/>
</dbReference>
<proteinExistence type="evidence at protein level"/>
<name>JZ11E_CHIGU</name>
<organism>
    <name type="scientific">Chilobrachys guangxiensis</name>
    <name type="common">Chinese earth tiger tarantula</name>
    <name type="synonym">Chilobrachys jingzhao</name>
    <dbReference type="NCBI Taxonomy" id="278060"/>
    <lineage>
        <taxon>Eukaryota</taxon>
        <taxon>Metazoa</taxon>
        <taxon>Ecdysozoa</taxon>
        <taxon>Arthropoda</taxon>
        <taxon>Chelicerata</taxon>
        <taxon>Arachnida</taxon>
        <taxon>Araneae</taxon>
        <taxon>Mygalomorphae</taxon>
        <taxon>Theraphosidae</taxon>
        <taxon>Chilobrachys</taxon>
    </lineage>
</organism>
<feature type="signal peptide" evidence="1">
    <location>
        <begin position="1"/>
        <end position="21"/>
    </location>
</feature>
<feature type="propeptide" id="PRO_0000398413" evidence="2 3">
    <location>
        <begin position="22"/>
        <end position="50"/>
    </location>
</feature>
<feature type="peptide" id="PRO_0000398414" description="Kappa-theraphotoxin-Cg1a 5" evidence="2 3 4">
    <location>
        <begin position="51"/>
        <end position="84"/>
    </location>
</feature>
<feature type="modified residue" description="Phenylalanine amide" evidence="2">
    <location>
        <position position="84"/>
    </location>
</feature>
<feature type="disulfide bond" evidence="2">
    <location>
        <begin position="52"/>
        <end position="66"/>
    </location>
</feature>
<feature type="disulfide bond" evidence="2">
    <location>
        <begin position="59"/>
        <end position="71"/>
    </location>
</feature>
<feature type="disulfide bond" evidence="2">
    <location>
        <begin position="65"/>
        <end position="78"/>
    </location>
</feature>
<evidence type="ECO:0000255" key="1"/>
<evidence type="ECO:0000269" key="2">
    <source>
    </source>
</evidence>
<evidence type="ECO:0000269" key="3">
    <source>
    </source>
</evidence>
<evidence type="ECO:0000269" key="4">
    <source>
    </source>
</evidence>
<evidence type="ECO:0000303" key="5">
    <source>
    </source>
</evidence>
<evidence type="ECO:0000303" key="6">
    <source>
    </source>
</evidence>
<evidence type="ECO:0000303" key="7">
    <source>
    </source>
</evidence>
<evidence type="ECO:0000303" key="8">
    <source>
    </source>
</evidence>
<evidence type="ECO:0000305" key="9"/>
<evidence type="ECO:0000305" key="10">
    <source>
    </source>
</evidence>
<evidence type="ECO:0000305" key="11">
    <source>
    </source>
</evidence>
<keyword id="KW-0027">Amidation</keyword>
<keyword id="KW-0903">Direct protein sequencing</keyword>
<keyword id="KW-1015">Disulfide bond</keyword>
<keyword id="KW-0872">Ion channel impairing toxin</keyword>
<keyword id="KW-0960">Knottin</keyword>
<keyword id="KW-0632">Potassium channel impairing toxin</keyword>
<keyword id="KW-0964">Secreted</keyword>
<keyword id="KW-0732">Signal</keyword>
<keyword id="KW-0800">Toxin</keyword>
<keyword id="KW-1220">Voltage-gated potassium channel impairing toxin</keyword>
<keyword id="KW-0738">Voltage-gated sodium channel impairing toxin</keyword>
<comment type="function">
    <text evidence="2 4">This toxin acts as a voltage-dependent gating-modifier (PubMed:25240294). It inhibits the sodium conductance (IC(50)=124 nM) and slows the fast inactivation (EC(50)=1180 nM) of Nav1.5/SCN5A (PubMed:17176080, PubMed:25240294). It significantly shifts the activation to more depolarized voltages and decreases the deactivation of Nav1.5 currents upon extreme depolarization, but only slightly affects voltage-dependence of steady-state inactivation (PubMed:17176080, PubMed:25240294). In addition, this toxin causes an approximately five-fold decrease in the rate of recovery from inactivation and an approximately 1.9-fold reduction in the closed-state inactivation rate (PubMed:25240294). This toxin integrates the functions of site 3 toxins (alpha-scorpion toxins) with site 4 toxins (beta-scorpion and spider toxins) by targeting multiple sites on Nav1.5 (PubMed:25240294). Also shows inhibition of voltage-gated potassium channels (5 uM completely inhibits Kv2.1/KCNB1, whereas 5 uM moderately inhibits Kv4.2/KCND2 Kv4.1/KCND1 channels) (PubMed:17176080).</text>
</comment>
<comment type="subcellular location">
    <subcellularLocation>
        <location evidence="2 3 4">Secreted</location>
    </subcellularLocation>
</comment>
<comment type="tissue specificity">
    <text evidence="10 11">Expressed by the venom gland.</text>
</comment>
<comment type="domain">
    <text evidence="2">The presence of a 'disulfide through disulfide knot' structurally defines this protein as a knottin.</text>
</comment>
<comment type="mass spectrometry" mass="3727.3" method="MALDI" evidence="2">
    <text>Monoisotopic mass.</text>
</comment>
<comment type="miscellaneous">
    <text evidence="10">Negative results: does not show effect on Kv1.1/KCNA1, Kv1.2/KCNA2, Kv1.3/KCNA3, Kv1.4/KCNA4, Kv3.1/KCNC1 (all expressed in oocytes), voltage-gated sodium channels (Nav1) (from DRG neurons), and in a range of voltage-gated calcium channels (expressed in rat DRG neurons) (PubMed:17176080). In addition, does not show significant toxic symptoms when injected into mice and into cockroaches (PubMed:17176080).</text>
</comment>
<comment type="similarity">
    <text evidence="9">Belongs to the neurotoxin 10 (Hwtx-1) family. 28 (Jztx-11) subfamily.</text>
</comment>
<comment type="caution">
    <text evidence="9">Several genes are coding for this toxin for which the structure by NMR has been determined. The cross-references to PDB and additional information can be found in entry AC P0C247.</text>
</comment>
<accession>B1P1E3</accession>
<reference key="1">
    <citation type="journal article" date="2008" name="Cell. Mol. Life Sci.">
        <title>Molecular diversity and evolution of cystine knot toxins of the tarantula Chilobrachys jingzhao.</title>
        <authorList>
            <person name="Chen J."/>
            <person name="Deng M."/>
            <person name="He Q."/>
            <person name="Meng E."/>
            <person name="Jiang L."/>
            <person name="Liao Z."/>
            <person name="Rong M."/>
            <person name="Liang S."/>
        </authorList>
    </citation>
    <scope>NUCLEOTIDE SEQUENCE [LARGE SCALE MRNA]</scope>
    <source>
        <tissue>Venom gland</tissue>
    </source>
</reference>
<reference key="2">
    <citation type="journal article" date="2007" name="Proteomics">
        <title>Proteomic and peptidomic analysis of the venom from Chinese tarantula Chilobrachys jingzhao.</title>
        <authorList>
            <person name="Liao Z."/>
            <person name="Cao J."/>
            <person name="Li S."/>
            <person name="Yan X."/>
            <person name="Hu W."/>
            <person name="He Q."/>
            <person name="Chen J."/>
            <person name="Tang J."/>
            <person name="Xie J."/>
            <person name="Liang S."/>
        </authorList>
    </citation>
    <scope>PROTEIN SEQUENCE OF 51-84</scope>
    <scope>SUBCELLULAR LOCATION</scope>
    <source>
        <tissue>Venom</tissue>
    </source>
</reference>
<reference key="3">
    <citation type="journal article" date="2006" name="Biochemistry">
        <title>Solution structure and functional characterization of Jingzhaotoxin-XI: a novel gating modifier of both potassium and sodium channels.</title>
        <authorList>
            <person name="Liao Z."/>
            <person name="Yuan C."/>
            <person name="Deng M."/>
            <person name="Li J."/>
            <person name="Chen J."/>
            <person name="Yang Y."/>
            <person name="Hu W."/>
            <person name="Liang S."/>
        </authorList>
    </citation>
    <scope>PROTEIN SEQUENCE OF 51-84</scope>
    <scope>SUBCELLULAR LOCATION</scope>
    <scope>FUNCTION</scope>
    <scope>STRUCTURE BY NMR OF 51-84</scope>
    <scope>AMIDATION AT PHE-84</scope>
    <scope>DISULFIDE BONDS</scope>
    <scope>MASS SPECTROMETRY</scope>
    <source>
        <tissue>Venom</tissue>
    </source>
</reference>
<reference key="4">
    <citation type="journal article" date="2014" name="Toxicon">
        <title>The tarantula toxin jingzhaotoxin-XI (kappa-theraphotoxin-Cj1a) regulates the activation and inactivation of the voltage-gated sodium channel Nav1.5.</title>
        <authorList>
            <person name="Tang C."/>
            <person name="Zhou X."/>
            <person name="Huang Y."/>
            <person name="Zhang Y."/>
            <person name="Hu Z."/>
            <person name="Wang M."/>
            <person name="Chen P."/>
            <person name="Liu Z."/>
            <person name="Liang S."/>
        </authorList>
    </citation>
    <scope>PROTEIN SEQUENCE OF 51-84</scope>
    <scope>FUNCTION</scope>
    <scope>SUBCELLULAR LOCATION</scope>
    <scope>DISULFIDE BOND</scope>
    <source>
        <tissue>Venom</tissue>
    </source>
</reference>